<organism>
    <name type="scientific">Aliivibrio salmonicida (strain LFI1238)</name>
    <name type="common">Vibrio salmonicida (strain LFI1238)</name>
    <dbReference type="NCBI Taxonomy" id="316275"/>
    <lineage>
        <taxon>Bacteria</taxon>
        <taxon>Pseudomonadati</taxon>
        <taxon>Pseudomonadota</taxon>
        <taxon>Gammaproteobacteria</taxon>
        <taxon>Vibrionales</taxon>
        <taxon>Vibrionaceae</taxon>
        <taxon>Aliivibrio</taxon>
    </lineage>
</organism>
<evidence type="ECO:0000255" key="1">
    <source>
        <dbReference type="HAMAP-Rule" id="MF_00298"/>
    </source>
</evidence>
<gene>
    <name evidence="1" type="primary">rppH</name>
    <name evidence="1" type="synonym">nudH</name>
    <name type="ordered locus">VSAL_I0569</name>
</gene>
<name>RPPH_ALISL</name>
<sequence length="170" mass="20348">MIDGDGFRPNVGIVICNSHGQVFWAKRYGQHSWQFPQGGIDDGETPEQAMYRELYEEVGLTKNDVRILASSRHWLRYKLPKRLVRWDSKPVCIGQKQKWFLLRLECDESKVNMQRDRSPEFDGWRWVSYWYPVRQVVSFKRDVYRRALKEFAAIAMPFKERKFKRKGKKG</sequence>
<keyword id="KW-0378">Hydrolase</keyword>
<reference key="1">
    <citation type="journal article" date="2008" name="BMC Genomics">
        <title>The genome sequence of the fish pathogen Aliivibrio salmonicida strain LFI1238 shows extensive evidence of gene decay.</title>
        <authorList>
            <person name="Hjerde E."/>
            <person name="Lorentzen M.S."/>
            <person name="Holden M.T."/>
            <person name="Seeger K."/>
            <person name="Paulsen S."/>
            <person name="Bason N."/>
            <person name="Churcher C."/>
            <person name="Harris D."/>
            <person name="Norbertczak H."/>
            <person name="Quail M.A."/>
            <person name="Sanders S."/>
            <person name="Thurston S."/>
            <person name="Parkhill J."/>
            <person name="Willassen N.P."/>
            <person name="Thomson N.R."/>
        </authorList>
    </citation>
    <scope>NUCLEOTIDE SEQUENCE [LARGE SCALE GENOMIC DNA]</scope>
    <source>
        <strain>LFI1238</strain>
    </source>
</reference>
<accession>B6EMX5</accession>
<feature type="chain" id="PRO_1000115265" description="RNA pyrophosphohydrolase">
    <location>
        <begin position="1"/>
        <end position="170"/>
    </location>
</feature>
<feature type="domain" description="Nudix hydrolase" evidence="1">
    <location>
        <begin position="6"/>
        <end position="149"/>
    </location>
</feature>
<feature type="short sequence motif" description="Nudix box">
    <location>
        <begin position="38"/>
        <end position="59"/>
    </location>
</feature>
<dbReference type="EC" id="3.6.1.-" evidence="1"/>
<dbReference type="EMBL" id="FM178379">
    <property type="protein sequence ID" value="CAQ78254.1"/>
    <property type="molecule type" value="Genomic_DNA"/>
</dbReference>
<dbReference type="RefSeq" id="WP_012549377.1">
    <property type="nucleotide sequence ID" value="NC_011312.1"/>
</dbReference>
<dbReference type="SMR" id="B6EMX5"/>
<dbReference type="KEGG" id="vsa:VSAL_I0569"/>
<dbReference type="eggNOG" id="COG0494">
    <property type="taxonomic scope" value="Bacteria"/>
</dbReference>
<dbReference type="HOGENOM" id="CLU_087195_3_2_6"/>
<dbReference type="Proteomes" id="UP000001730">
    <property type="component" value="Chromosome 1"/>
</dbReference>
<dbReference type="GO" id="GO:0005737">
    <property type="term" value="C:cytoplasm"/>
    <property type="evidence" value="ECO:0007669"/>
    <property type="project" value="TreeGrafter"/>
</dbReference>
<dbReference type="GO" id="GO:0034353">
    <property type="term" value="F:mRNA 5'-diphosphatase activity"/>
    <property type="evidence" value="ECO:0007669"/>
    <property type="project" value="TreeGrafter"/>
</dbReference>
<dbReference type="GO" id="GO:0006402">
    <property type="term" value="P:mRNA catabolic process"/>
    <property type="evidence" value="ECO:0007669"/>
    <property type="project" value="TreeGrafter"/>
</dbReference>
<dbReference type="CDD" id="cd03671">
    <property type="entry name" value="NUDIX_Ap4A_hydrolase_plant_like"/>
    <property type="match status" value="1"/>
</dbReference>
<dbReference type="FunFam" id="3.90.79.10:FF:000001">
    <property type="entry name" value="RNA pyrophosphohydrolase"/>
    <property type="match status" value="1"/>
</dbReference>
<dbReference type="Gene3D" id="3.90.79.10">
    <property type="entry name" value="Nucleoside Triphosphate Pyrophosphohydrolase"/>
    <property type="match status" value="1"/>
</dbReference>
<dbReference type="HAMAP" id="MF_00298">
    <property type="entry name" value="Nudix_RppH"/>
    <property type="match status" value="1"/>
</dbReference>
<dbReference type="InterPro" id="IPR020476">
    <property type="entry name" value="Nudix_hydrolase"/>
</dbReference>
<dbReference type="InterPro" id="IPR015797">
    <property type="entry name" value="NUDIX_hydrolase-like_dom_sf"/>
</dbReference>
<dbReference type="InterPro" id="IPR020084">
    <property type="entry name" value="NUDIX_hydrolase_CS"/>
</dbReference>
<dbReference type="InterPro" id="IPR000086">
    <property type="entry name" value="NUDIX_hydrolase_dom"/>
</dbReference>
<dbReference type="InterPro" id="IPR022927">
    <property type="entry name" value="RppH"/>
</dbReference>
<dbReference type="NCBIfam" id="NF001934">
    <property type="entry name" value="PRK00714.1-1"/>
    <property type="match status" value="1"/>
</dbReference>
<dbReference type="NCBIfam" id="NF001936">
    <property type="entry name" value="PRK00714.1-3"/>
    <property type="match status" value="1"/>
</dbReference>
<dbReference type="NCBIfam" id="NF001937">
    <property type="entry name" value="PRK00714.1-4"/>
    <property type="match status" value="1"/>
</dbReference>
<dbReference type="NCBIfam" id="NF001938">
    <property type="entry name" value="PRK00714.1-5"/>
    <property type="match status" value="1"/>
</dbReference>
<dbReference type="PANTHER" id="PTHR23114">
    <property type="entry name" value="M7GPPPN-MRNA HYDROLASE"/>
    <property type="match status" value="1"/>
</dbReference>
<dbReference type="PANTHER" id="PTHR23114:SF17">
    <property type="entry name" value="M7GPPPN-MRNA HYDROLASE"/>
    <property type="match status" value="1"/>
</dbReference>
<dbReference type="Pfam" id="PF00293">
    <property type="entry name" value="NUDIX"/>
    <property type="match status" value="1"/>
</dbReference>
<dbReference type="PRINTS" id="PR00502">
    <property type="entry name" value="NUDIXFAMILY"/>
</dbReference>
<dbReference type="SUPFAM" id="SSF55811">
    <property type="entry name" value="Nudix"/>
    <property type="match status" value="1"/>
</dbReference>
<dbReference type="PROSITE" id="PS51462">
    <property type="entry name" value="NUDIX"/>
    <property type="match status" value="1"/>
</dbReference>
<dbReference type="PROSITE" id="PS00893">
    <property type="entry name" value="NUDIX_BOX"/>
    <property type="match status" value="1"/>
</dbReference>
<comment type="function">
    <text evidence="1">Accelerates the degradation of transcripts by removing pyrophosphate from the 5'-end of triphosphorylated RNA, leading to a more labile monophosphorylated state that can stimulate subsequent ribonuclease cleavage.</text>
</comment>
<comment type="cofactor">
    <cofactor evidence="1">
        <name>a divalent metal cation</name>
        <dbReference type="ChEBI" id="CHEBI:60240"/>
    </cofactor>
</comment>
<comment type="similarity">
    <text evidence="1">Belongs to the Nudix hydrolase family. RppH subfamily.</text>
</comment>
<protein>
    <recommendedName>
        <fullName evidence="1">RNA pyrophosphohydrolase</fullName>
        <ecNumber evidence="1">3.6.1.-</ecNumber>
    </recommendedName>
    <alternativeName>
        <fullName evidence="1">(Di)nucleoside polyphosphate hydrolase</fullName>
    </alternativeName>
</protein>
<proteinExistence type="inferred from homology"/>